<keyword id="KW-0963">Cytoplasm</keyword>
<keyword id="KW-0539">Nucleus</keyword>
<keyword id="KW-1185">Reference proteome</keyword>
<keyword id="KW-0804">Transcription</keyword>
<keyword id="KW-0805">Transcription regulation</keyword>
<name>MYCBP_MOUSE</name>
<organism>
    <name type="scientific">Mus musculus</name>
    <name type="common">Mouse</name>
    <dbReference type="NCBI Taxonomy" id="10090"/>
    <lineage>
        <taxon>Eukaryota</taxon>
        <taxon>Metazoa</taxon>
        <taxon>Chordata</taxon>
        <taxon>Craniata</taxon>
        <taxon>Vertebrata</taxon>
        <taxon>Euteleostomi</taxon>
        <taxon>Mammalia</taxon>
        <taxon>Eutheria</taxon>
        <taxon>Euarchontoglires</taxon>
        <taxon>Glires</taxon>
        <taxon>Rodentia</taxon>
        <taxon>Myomorpha</taxon>
        <taxon>Muroidea</taxon>
        <taxon>Muridae</taxon>
        <taxon>Murinae</taxon>
        <taxon>Mus</taxon>
        <taxon>Mus</taxon>
    </lineage>
</organism>
<accession>Q9EQS3</accession>
<accession>O88308</accession>
<accession>Q8R048</accession>
<reference key="1">
    <citation type="journal article" date="2003" name="Genomics">
        <title>Molecular cloning of the mouse AMY-1 gene and identification of the synergistic activation of the AMY-1 promoter by GATA-1 and Sp1.</title>
        <authorList>
            <person name="Furusawa M."/>
            <person name="Taira T."/>
            <person name="Iguchi-Ariga S.M.M."/>
            <person name="Ariga H."/>
        </authorList>
    </citation>
    <scope>NUCLEOTIDE SEQUENCE [GENOMIC DNA / MRNA]</scope>
    <scope>INDUCTION</scope>
    <source>
        <strain>129/SvEvTacfBr</strain>
        <tissue>Spleen</tissue>
        <tissue>Thymus</tissue>
    </source>
</reference>
<reference key="2">
    <citation type="journal article" date="2005" name="Science">
        <title>The transcriptional landscape of the mammalian genome.</title>
        <authorList>
            <person name="Carninci P."/>
            <person name="Kasukawa T."/>
            <person name="Katayama S."/>
            <person name="Gough J."/>
            <person name="Frith M.C."/>
            <person name="Maeda N."/>
            <person name="Oyama R."/>
            <person name="Ravasi T."/>
            <person name="Lenhard B."/>
            <person name="Wells C."/>
            <person name="Kodzius R."/>
            <person name="Shimokawa K."/>
            <person name="Bajic V.B."/>
            <person name="Brenner S.E."/>
            <person name="Batalov S."/>
            <person name="Forrest A.R."/>
            <person name="Zavolan M."/>
            <person name="Davis M.J."/>
            <person name="Wilming L.G."/>
            <person name="Aidinis V."/>
            <person name="Allen J.E."/>
            <person name="Ambesi-Impiombato A."/>
            <person name="Apweiler R."/>
            <person name="Aturaliya R.N."/>
            <person name="Bailey T.L."/>
            <person name="Bansal M."/>
            <person name="Baxter L."/>
            <person name="Beisel K.W."/>
            <person name="Bersano T."/>
            <person name="Bono H."/>
            <person name="Chalk A.M."/>
            <person name="Chiu K.P."/>
            <person name="Choudhary V."/>
            <person name="Christoffels A."/>
            <person name="Clutterbuck D.R."/>
            <person name="Crowe M.L."/>
            <person name="Dalla E."/>
            <person name="Dalrymple B.P."/>
            <person name="de Bono B."/>
            <person name="Della Gatta G."/>
            <person name="di Bernardo D."/>
            <person name="Down T."/>
            <person name="Engstrom P."/>
            <person name="Fagiolini M."/>
            <person name="Faulkner G."/>
            <person name="Fletcher C.F."/>
            <person name="Fukushima T."/>
            <person name="Furuno M."/>
            <person name="Futaki S."/>
            <person name="Gariboldi M."/>
            <person name="Georgii-Hemming P."/>
            <person name="Gingeras T.R."/>
            <person name="Gojobori T."/>
            <person name="Green R.E."/>
            <person name="Gustincich S."/>
            <person name="Harbers M."/>
            <person name="Hayashi Y."/>
            <person name="Hensch T.K."/>
            <person name="Hirokawa N."/>
            <person name="Hill D."/>
            <person name="Huminiecki L."/>
            <person name="Iacono M."/>
            <person name="Ikeo K."/>
            <person name="Iwama A."/>
            <person name="Ishikawa T."/>
            <person name="Jakt M."/>
            <person name="Kanapin A."/>
            <person name="Katoh M."/>
            <person name="Kawasawa Y."/>
            <person name="Kelso J."/>
            <person name="Kitamura H."/>
            <person name="Kitano H."/>
            <person name="Kollias G."/>
            <person name="Krishnan S.P."/>
            <person name="Kruger A."/>
            <person name="Kummerfeld S.K."/>
            <person name="Kurochkin I.V."/>
            <person name="Lareau L.F."/>
            <person name="Lazarevic D."/>
            <person name="Lipovich L."/>
            <person name="Liu J."/>
            <person name="Liuni S."/>
            <person name="McWilliam S."/>
            <person name="Madan Babu M."/>
            <person name="Madera M."/>
            <person name="Marchionni L."/>
            <person name="Matsuda H."/>
            <person name="Matsuzawa S."/>
            <person name="Miki H."/>
            <person name="Mignone F."/>
            <person name="Miyake S."/>
            <person name="Morris K."/>
            <person name="Mottagui-Tabar S."/>
            <person name="Mulder N."/>
            <person name="Nakano N."/>
            <person name="Nakauchi H."/>
            <person name="Ng P."/>
            <person name="Nilsson R."/>
            <person name="Nishiguchi S."/>
            <person name="Nishikawa S."/>
            <person name="Nori F."/>
            <person name="Ohara O."/>
            <person name="Okazaki Y."/>
            <person name="Orlando V."/>
            <person name="Pang K.C."/>
            <person name="Pavan W.J."/>
            <person name="Pavesi G."/>
            <person name="Pesole G."/>
            <person name="Petrovsky N."/>
            <person name="Piazza S."/>
            <person name="Reed J."/>
            <person name="Reid J.F."/>
            <person name="Ring B.Z."/>
            <person name="Ringwald M."/>
            <person name="Rost B."/>
            <person name="Ruan Y."/>
            <person name="Salzberg S.L."/>
            <person name="Sandelin A."/>
            <person name="Schneider C."/>
            <person name="Schoenbach C."/>
            <person name="Sekiguchi K."/>
            <person name="Semple C.A."/>
            <person name="Seno S."/>
            <person name="Sessa L."/>
            <person name="Sheng Y."/>
            <person name="Shibata Y."/>
            <person name="Shimada H."/>
            <person name="Shimada K."/>
            <person name="Silva D."/>
            <person name="Sinclair B."/>
            <person name="Sperling S."/>
            <person name="Stupka E."/>
            <person name="Sugiura K."/>
            <person name="Sultana R."/>
            <person name="Takenaka Y."/>
            <person name="Taki K."/>
            <person name="Tammoja K."/>
            <person name="Tan S.L."/>
            <person name="Tang S."/>
            <person name="Taylor M.S."/>
            <person name="Tegner J."/>
            <person name="Teichmann S.A."/>
            <person name="Ueda H.R."/>
            <person name="van Nimwegen E."/>
            <person name="Verardo R."/>
            <person name="Wei C.L."/>
            <person name="Yagi K."/>
            <person name="Yamanishi H."/>
            <person name="Zabarovsky E."/>
            <person name="Zhu S."/>
            <person name="Zimmer A."/>
            <person name="Hide W."/>
            <person name="Bult C."/>
            <person name="Grimmond S.M."/>
            <person name="Teasdale R.D."/>
            <person name="Liu E.T."/>
            <person name="Brusic V."/>
            <person name="Quackenbush J."/>
            <person name="Wahlestedt C."/>
            <person name="Mattick J.S."/>
            <person name="Hume D.A."/>
            <person name="Kai C."/>
            <person name="Sasaki D."/>
            <person name="Tomaru Y."/>
            <person name="Fukuda S."/>
            <person name="Kanamori-Katayama M."/>
            <person name="Suzuki M."/>
            <person name="Aoki J."/>
            <person name="Arakawa T."/>
            <person name="Iida J."/>
            <person name="Imamura K."/>
            <person name="Itoh M."/>
            <person name="Kato T."/>
            <person name="Kawaji H."/>
            <person name="Kawagashira N."/>
            <person name="Kawashima T."/>
            <person name="Kojima M."/>
            <person name="Kondo S."/>
            <person name="Konno H."/>
            <person name="Nakano K."/>
            <person name="Ninomiya N."/>
            <person name="Nishio T."/>
            <person name="Okada M."/>
            <person name="Plessy C."/>
            <person name="Shibata K."/>
            <person name="Shiraki T."/>
            <person name="Suzuki S."/>
            <person name="Tagami M."/>
            <person name="Waki K."/>
            <person name="Watahiki A."/>
            <person name="Okamura-Oho Y."/>
            <person name="Suzuki H."/>
            <person name="Kawai J."/>
            <person name="Hayashizaki Y."/>
        </authorList>
    </citation>
    <scope>NUCLEOTIDE SEQUENCE [LARGE SCALE MRNA]</scope>
    <source>
        <strain>C57BL/6J</strain>
        <tissue>Thymus</tissue>
    </source>
</reference>
<reference key="3">
    <citation type="journal article" date="2009" name="PLoS Biol.">
        <title>Lineage-specific biology revealed by a finished genome assembly of the mouse.</title>
        <authorList>
            <person name="Church D.M."/>
            <person name="Goodstadt L."/>
            <person name="Hillier L.W."/>
            <person name="Zody M.C."/>
            <person name="Goldstein S."/>
            <person name="She X."/>
            <person name="Bult C.J."/>
            <person name="Agarwala R."/>
            <person name="Cherry J.L."/>
            <person name="DiCuccio M."/>
            <person name="Hlavina W."/>
            <person name="Kapustin Y."/>
            <person name="Meric P."/>
            <person name="Maglott D."/>
            <person name="Birtle Z."/>
            <person name="Marques A.C."/>
            <person name="Graves T."/>
            <person name="Zhou S."/>
            <person name="Teague B."/>
            <person name="Potamousis K."/>
            <person name="Churas C."/>
            <person name="Place M."/>
            <person name="Herschleb J."/>
            <person name="Runnheim R."/>
            <person name="Forrest D."/>
            <person name="Amos-Landgraf J."/>
            <person name="Schwartz D.C."/>
            <person name="Cheng Z."/>
            <person name="Lindblad-Toh K."/>
            <person name="Eichler E.E."/>
            <person name="Ponting C.P."/>
        </authorList>
    </citation>
    <scope>NUCLEOTIDE SEQUENCE [LARGE SCALE GENOMIC DNA]</scope>
    <source>
        <strain>C57BL/6J</strain>
    </source>
</reference>
<reference key="4">
    <citation type="submission" date="2005-07" db="EMBL/GenBank/DDBJ databases">
        <authorList>
            <person name="Mural R.J."/>
            <person name="Adams M.D."/>
            <person name="Myers E.W."/>
            <person name="Smith H.O."/>
            <person name="Venter J.C."/>
        </authorList>
    </citation>
    <scope>NUCLEOTIDE SEQUENCE [LARGE SCALE GENOMIC DNA]</scope>
</reference>
<reference key="5">
    <citation type="journal article" date="2004" name="Genome Res.">
        <title>The status, quality, and expansion of the NIH full-length cDNA project: the Mammalian Gene Collection (MGC).</title>
        <authorList>
            <consortium name="The MGC Project Team"/>
        </authorList>
    </citation>
    <scope>NUCLEOTIDE SEQUENCE [LARGE SCALE MRNA]</scope>
    <source>
        <strain>FVB/N</strain>
        <tissue>Mammary tumor</tissue>
        <tissue>Testis</tissue>
    </source>
</reference>
<reference key="6">
    <citation type="journal article" date="2010" name="Cell">
        <title>A tissue-specific atlas of mouse protein phosphorylation and expression.</title>
        <authorList>
            <person name="Huttlin E.L."/>
            <person name="Jedrychowski M.P."/>
            <person name="Elias J.E."/>
            <person name="Goswami T."/>
            <person name="Rad R."/>
            <person name="Beausoleil S.A."/>
            <person name="Villen J."/>
            <person name="Haas W."/>
            <person name="Sowa M.E."/>
            <person name="Gygi S.P."/>
        </authorList>
    </citation>
    <scope>IDENTIFICATION BY MASS SPECTROMETRY [LARGE SCALE ANALYSIS]</scope>
    <source>
        <tissue>Brown adipose tissue</tissue>
        <tissue>Kidney</tissue>
        <tissue>Pancreas</tissue>
        <tissue>Testis</tissue>
    </source>
</reference>
<dbReference type="EMBL" id="AB015858">
    <property type="protein sequence ID" value="BAA31257.1"/>
    <property type="molecule type" value="mRNA"/>
</dbReference>
<dbReference type="EMBL" id="AB052913">
    <property type="protein sequence ID" value="BAB20018.1"/>
    <property type="molecule type" value="Genomic_DNA"/>
</dbReference>
<dbReference type="EMBL" id="AK077633">
    <property type="protein sequence ID" value="BAC36916.1"/>
    <property type="molecule type" value="mRNA"/>
</dbReference>
<dbReference type="EMBL" id="AK077762">
    <property type="protein sequence ID" value="BAC36997.1"/>
    <property type="molecule type" value="mRNA"/>
</dbReference>
<dbReference type="EMBL" id="AK037661">
    <property type="protein sequence ID" value="BAE20517.1"/>
    <property type="molecule type" value="mRNA"/>
</dbReference>
<dbReference type="EMBL" id="AK145773">
    <property type="protein sequence ID" value="BAE26643.1"/>
    <property type="molecule type" value="mRNA"/>
</dbReference>
<dbReference type="EMBL" id="AL606962">
    <property type="status" value="NOT_ANNOTATED_CDS"/>
    <property type="molecule type" value="Genomic_DNA"/>
</dbReference>
<dbReference type="EMBL" id="CH466552">
    <property type="protein sequence ID" value="EDL30369.1"/>
    <property type="molecule type" value="Genomic_DNA"/>
</dbReference>
<dbReference type="EMBL" id="BC028344">
    <property type="protein sequence ID" value="AAH28344.1"/>
    <property type="molecule type" value="mRNA"/>
</dbReference>
<dbReference type="EMBL" id="BC048478">
    <property type="protein sequence ID" value="AAH48478.1"/>
    <property type="molecule type" value="mRNA"/>
</dbReference>
<dbReference type="CCDS" id="CCDS18621.1"/>
<dbReference type="RefSeq" id="NP_062634.2">
    <property type="nucleotide sequence ID" value="NM_019660.3"/>
</dbReference>
<dbReference type="SMR" id="Q9EQS3"/>
<dbReference type="BioGRID" id="207892">
    <property type="interactions" value="9"/>
</dbReference>
<dbReference type="CORUM" id="Q9EQS3"/>
<dbReference type="FunCoup" id="Q9EQS3">
    <property type="interactions" value="2931"/>
</dbReference>
<dbReference type="IntAct" id="Q9EQS3">
    <property type="interactions" value="1"/>
</dbReference>
<dbReference type="STRING" id="10090.ENSMUSP00000030400"/>
<dbReference type="iPTMnet" id="Q9EQS3"/>
<dbReference type="PhosphoSitePlus" id="Q9EQS3"/>
<dbReference type="jPOST" id="Q9EQS3"/>
<dbReference type="PaxDb" id="10090-ENSMUSP00000030400"/>
<dbReference type="PeptideAtlas" id="Q9EQS3"/>
<dbReference type="ProteomicsDB" id="286093"/>
<dbReference type="Pumba" id="Q9EQS3"/>
<dbReference type="DNASU" id="56309"/>
<dbReference type="Ensembl" id="ENSMUST00000030400.14">
    <property type="protein sequence ID" value="ENSMUSP00000030400.8"/>
    <property type="gene ID" value="ENSMUSG00000028647.14"/>
</dbReference>
<dbReference type="GeneID" id="56309"/>
<dbReference type="KEGG" id="mmu:56309"/>
<dbReference type="UCSC" id="uc008uql.1">
    <property type="organism name" value="mouse"/>
</dbReference>
<dbReference type="AGR" id="MGI:1891750"/>
<dbReference type="CTD" id="26292"/>
<dbReference type="MGI" id="MGI:1891750">
    <property type="gene designation" value="Mycbp"/>
</dbReference>
<dbReference type="VEuPathDB" id="HostDB:ENSMUSG00000028647"/>
<dbReference type="eggNOG" id="ENOG502S2IC">
    <property type="taxonomic scope" value="Eukaryota"/>
</dbReference>
<dbReference type="GeneTree" id="ENSGT00390000017974"/>
<dbReference type="HOGENOM" id="CLU_135895_0_1_1"/>
<dbReference type="InParanoid" id="Q9EQS3"/>
<dbReference type="OMA" id="MMHYKEE"/>
<dbReference type="OrthoDB" id="33304at9989"/>
<dbReference type="TreeFam" id="TF329224"/>
<dbReference type="BioGRID-ORCS" id="56309">
    <property type="hits" value="2 hits in 81 CRISPR screens"/>
</dbReference>
<dbReference type="ChiTaRS" id="Mycbp">
    <property type="organism name" value="mouse"/>
</dbReference>
<dbReference type="PRO" id="PR:Q9EQS3"/>
<dbReference type="Proteomes" id="UP000000589">
    <property type="component" value="Chromosome 4"/>
</dbReference>
<dbReference type="RNAct" id="Q9EQS3">
    <property type="molecule type" value="protein"/>
</dbReference>
<dbReference type="Bgee" id="ENSMUSG00000028647">
    <property type="expression patterns" value="Expressed in undifferentiated genital tubercle and 247 other cell types or tissues"/>
</dbReference>
<dbReference type="ExpressionAtlas" id="Q9EQS3">
    <property type="expression patterns" value="baseline and differential"/>
</dbReference>
<dbReference type="GO" id="GO:0005737">
    <property type="term" value="C:cytoplasm"/>
    <property type="evidence" value="ECO:0000266"/>
    <property type="project" value="MGI"/>
</dbReference>
<dbReference type="GO" id="GO:0005634">
    <property type="term" value="C:nucleus"/>
    <property type="evidence" value="ECO:0000250"/>
    <property type="project" value="UniProtKB"/>
</dbReference>
<dbReference type="GO" id="GO:0003713">
    <property type="term" value="F:transcription coactivator activity"/>
    <property type="evidence" value="ECO:0000250"/>
    <property type="project" value="UniProtKB"/>
</dbReference>
<dbReference type="GO" id="GO:0006355">
    <property type="term" value="P:regulation of DNA-templated transcription"/>
    <property type="evidence" value="ECO:0000250"/>
    <property type="project" value="UniProtKB"/>
</dbReference>
<dbReference type="CDD" id="cd21937">
    <property type="entry name" value="ZIP_MycBP-like"/>
    <property type="match status" value="1"/>
</dbReference>
<dbReference type="Gene3D" id="6.10.250.1060">
    <property type="match status" value="1"/>
</dbReference>
<dbReference type="InterPro" id="IPR026060">
    <property type="entry name" value="AMY1"/>
</dbReference>
<dbReference type="PANTHER" id="PTHR13168">
    <property type="entry name" value="ASSOCIATE OF C-MYC AMY-1"/>
    <property type="match status" value="1"/>
</dbReference>
<dbReference type="PANTHER" id="PTHR13168:SF0">
    <property type="entry name" value="C-MYC-BINDING PROTEIN"/>
    <property type="match status" value="1"/>
</dbReference>
<dbReference type="PRINTS" id="PR02028">
    <property type="entry name" value="CMYCBINDINGP"/>
</dbReference>
<comment type="function">
    <text evidence="1">May control the transcriptional activity of MYC. Stimulates the activation of E box-dependent transcription by MYC (By similarity).</text>
</comment>
<comment type="subunit">
    <text evidence="2">Binds via its C-terminal region to the N-terminal region of MYC. Associates with AKAP1/S-AKAP84. Interacts with MYCBPAP. Interacts with CFAP91.</text>
</comment>
<comment type="subcellular location">
    <subcellularLocation>
        <location evidence="1">Cytoplasm</location>
    </subcellularLocation>
    <subcellularLocation>
        <location evidence="1">Nucleus</location>
    </subcellularLocation>
    <text evidence="1">Translocates into the nucleus in the S phase of the cell cycle.</text>
</comment>
<comment type="induction">
    <text evidence="3">MYCBP expression is synergistically activated by SP1 and GATA-1.</text>
</comment>
<comment type="similarity">
    <text evidence="4">Belongs to the AMY1 family.</text>
</comment>
<proteinExistence type="evidence at protein level"/>
<feature type="chain" id="PRO_0000220981" description="c-Myc-binding protein">
    <location>
        <begin position="1"/>
        <end position="103"/>
    </location>
</feature>
<feature type="sequence conflict" description="In Ref. 1; BAB20018." evidence="4" ref="1">
    <original>R</original>
    <variation>H</variation>
    <location>
        <position position="11"/>
    </location>
</feature>
<feature type="sequence conflict" description="In Ref. 1; BAA31257." evidence="4" ref="1">
    <original>L</original>
    <variation>V</variation>
    <location>
        <position position="65"/>
    </location>
</feature>
<gene>
    <name type="primary">Mycbp</name>
    <name type="synonym">Amy1</name>
</gene>
<protein>
    <recommendedName>
        <fullName>c-Myc-binding protein</fullName>
    </recommendedName>
    <alternativeName>
        <fullName>Associate of Myc 1</fullName>
        <shortName>AMY-1</shortName>
    </alternativeName>
</protein>
<evidence type="ECO:0000250" key="1"/>
<evidence type="ECO:0000250" key="2">
    <source>
        <dbReference type="UniProtKB" id="Q99417"/>
    </source>
</evidence>
<evidence type="ECO:0000269" key="3">
    <source>
    </source>
</evidence>
<evidence type="ECO:0000305" key="4"/>
<sequence>MAHYKAADSKREQFRRYLEKSGVLDTLTKVLVALYEEPEKPTSALDFLKHHLGAATPENPEIELLRLELAEMKEKYEATVEENKKLKAKLVQYEPPQEEKRAE</sequence>